<name>NDK_PROMP</name>
<comment type="function">
    <text evidence="1">Major role in the synthesis of nucleoside triphosphates other than ATP. The ATP gamma phosphate is transferred to the NDP beta phosphate via a ping-pong mechanism, using a phosphorylated active-site intermediate.</text>
</comment>
<comment type="catalytic activity">
    <reaction evidence="1">
        <text>a 2'-deoxyribonucleoside 5'-diphosphate + ATP = a 2'-deoxyribonucleoside 5'-triphosphate + ADP</text>
        <dbReference type="Rhea" id="RHEA:44640"/>
        <dbReference type="ChEBI" id="CHEBI:30616"/>
        <dbReference type="ChEBI" id="CHEBI:61560"/>
        <dbReference type="ChEBI" id="CHEBI:73316"/>
        <dbReference type="ChEBI" id="CHEBI:456216"/>
        <dbReference type="EC" id="2.7.4.6"/>
    </reaction>
</comment>
<comment type="catalytic activity">
    <reaction evidence="1">
        <text>a ribonucleoside 5'-diphosphate + ATP = a ribonucleoside 5'-triphosphate + ADP</text>
        <dbReference type="Rhea" id="RHEA:18113"/>
        <dbReference type="ChEBI" id="CHEBI:30616"/>
        <dbReference type="ChEBI" id="CHEBI:57930"/>
        <dbReference type="ChEBI" id="CHEBI:61557"/>
        <dbReference type="ChEBI" id="CHEBI:456216"/>
        <dbReference type="EC" id="2.7.4.6"/>
    </reaction>
</comment>
<comment type="cofactor">
    <cofactor evidence="1">
        <name>Mg(2+)</name>
        <dbReference type="ChEBI" id="CHEBI:18420"/>
    </cofactor>
</comment>
<comment type="subunit">
    <text evidence="1">Homotetramer.</text>
</comment>
<comment type="subcellular location">
    <subcellularLocation>
        <location evidence="1">Cytoplasm</location>
    </subcellularLocation>
</comment>
<comment type="similarity">
    <text evidence="1">Belongs to the NDK family.</text>
</comment>
<gene>
    <name evidence="1" type="primary">ndk</name>
    <name type="ordered locus">PMM0046</name>
</gene>
<feature type="chain" id="PRO_0000137023" description="Nucleoside diphosphate kinase">
    <location>
        <begin position="1"/>
        <end position="152"/>
    </location>
</feature>
<feature type="active site" description="Pros-phosphohistidine intermediate" evidence="1">
    <location>
        <position position="117"/>
    </location>
</feature>
<feature type="binding site" evidence="1">
    <location>
        <position position="11"/>
    </location>
    <ligand>
        <name>ATP</name>
        <dbReference type="ChEBI" id="CHEBI:30616"/>
    </ligand>
</feature>
<feature type="binding site" evidence="1">
    <location>
        <position position="59"/>
    </location>
    <ligand>
        <name>ATP</name>
        <dbReference type="ChEBI" id="CHEBI:30616"/>
    </ligand>
</feature>
<feature type="binding site" evidence="1">
    <location>
        <position position="87"/>
    </location>
    <ligand>
        <name>ATP</name>
        <dbReference type="ChEBI" id="CHEBI:30616"/>
    </ligand>
</feature>
<feature type="binding site" evidence="1">
    <location>
        <position position="93"/>
    </location>
    <ligand>
        <name>ATP</name>
        <dbReference type="ChEBI" id="CHEBI:30616"/>
    </ligand>
</feature>
<feature type="binding site" evidence="1">
    <location>
        <position position="104"/>
    </location>
    <ligand>
        <name>ATP</name>
        <dbReference type="ChEBI" id="CHEBI:30616"/>
    </ligand>
</feature>
<feature type="binding site" evidence="1">
    <location>
        <position position="114"/>
    </location>
    <ligand>
        <name>ATP</name>
        <dbReference type="ChEBI" id="CHEBI:30616"/>
    </ligand>
</feature>
<dbReference type="EC" id="2.7.4.6" evidence="1"/>
<dbReference type="EMBL" id="BX548174">
    <property type="protein sequence ID" value="CAE18505.1"/>
    <property type="molecule type" value="Genomic_DNA"/>
</dbReference>
<dbReference type="RefSeq" id="WP_011131684.1">
    <property type="nucleotide sequence ID" value="NC_005072.1"/>
</dbReference>
<dbReference type="SMR" id="Q7V3M8"/>
<dbReference type="STRING" id="59919.PMM0046"/>
<dbReference type="KEGG" id="pmm:PMM0046"/>
<dbReference type="eggNOG" id="COG0105">
    <property type="taxonomic scope" value="Bacteria"/>
</dbReference>
<dbReference type="HOGENOM" id="CLU_060216_6_3_3"/>
<dbReference type="OrthoDB" id="9801161at2"/>
<dbReference type="Proteomes" id="UP000001026">
    <property type="component" value="Chromosome"/>
</dbReference>
<dbReference type="GO" id="GO:0005737">
    <property type="term" value="C:cytoplasm"/>
    <property type="evidence" value="ECO:0007669"/>
    <property type="project" value="UniProtKB-SubCell"/>
</dbReference>
<dbReference type="GO" id="GO:0005524">
    <property type="term" value="F:ATP binding"/>
    <property type="evidence" value="ECO:0007669"/>
    <property type="project" value="UniProtKB-UniRule"/>
</dbReference>
<dbReference type="GO" id="GO:0046872">
    <property type="term" value="F:metal ion binding"/>
    <property type="evidence" value="ECO:0007669"/>
    <property type="project" value="UniProtKB-KW"/>
</dbReference>
<dbReference type="GO" id="GO:0004550">
    <property type="term" value="F:nucleoside diphosphate kinase activity"/>
    <property type="evidence" value="ECO:0007669"/>
    <property type="project" value="UniProtKB-UniRule"/>
</dbReference>
<dbReference type="GO" id="GO:0006241">
    <property type="term" value="P:CTP biosynthetic process"/>
    <property type="evidence" value="ECO:0007669"/>
    <property type="project" value="UniProtKB-UniRule"/>
</dbReference>
<dbReference type="GO" id="GO:0006183">
    <property type="term" value="P:GTP biosynthetic process"/>
    <property type="evidence" value="ECO:0007669"/>
    <property type="project" value="UniProtKB-UniRule"/>
</dbReference>
<dbReference type="GO" id="GO:0006228">
    <property type="term" value="P:UTP biosynthetic process"/>
    <property type="evidence" value="ECO:0007669"/>
    <property type="project" value="UniProtKB-UniRule"/>
</dbReference>
<dbReference type="CDD" id="cd04413">
    <property type="entry name" value="NDPk_I"/>
    <property type="match status" value="1"/>
</dbReference>
<dbReference type="FunFam" id="3.30.70.141:FF:000002">
    <property type="entry name" value="Nucleoside diphosphate kinase"/>
    <property type="match status" value="1"/>
</dbReference>
<dbReference type="Gene3D" id="3.30.70.141">
    <property type="entry name" value="Nucleoside diphosphate kinase-like domain"/>
    <property type="match status" value="1"/>
</dbReference>
<dbReference type="HAMAP" id="MF_00451">
    <property type="entry name" value="NDP_kinase"/>
    <property type="match status" value="1"/>
</dbReference>
<dbReference type="InterPro" id="IPR034907">
    <property type="entry name" value="NDK-like_dom"/>
</dbReference>
<dbReference type="InterPro" id="IPR036850">
    <property type="entry name" value="NDK-like_dom_sf"/>
</dbReference>
<dbReference type="InterPro" id="IPR001564">
    <property type="entry name" value="Nucleoside_diP_kinase"/>
</dbReference>
<dbReference type="InterPro" id="IPR023005">
    <property type="entry name" value="Nucleoside_diP_kinase_AS"/>
</dbReference>
<dbReference type="NCBIfam" id="NF001908">
    <property type="entry name" value="PRK00668.1"/>
    <property type="match status" value="1"/>
</dbReference>
<dbReference type="PANTHER" id="PTHR11349">
    <property type="entry name" value="NUCLEOSIDE DIPHOSPHATE KINASE"/>
    <property type="match status" value="1"/>
</dbReference>
<dbReference type="Pfam" id="PF00334">
    <property type="entry name" value="NDK"/>
    <property type="match status" value="1"/>
</dbReference>
<dbReference type="PRINTS" id="PR01243">
    <property type="entry name" value="NUCDPKINASE"/>
</dbReference>
<dbReference type="SMART" id="SM00562">
    <property type="entry name" value="NDK"/>
    <property type="match status" value="1"/>
</dbReference>
<dbReference type="SUPFAM" id="SSF54919">
    <property type="entry name" value="Nucleoside diphosphate kinase, NDK"/>
    <property type="match status" value="1"/>
</dbReference>
<dbReference type="PROSITE" id="PS00469">
    <property type="entry name" value="NDPK"/>
    <property type="match status" value="1"/>
</dbReference>
<dbReference type="PROSITE" id="PS51374">
    <property type="entry name" value="NDPK_LIKE"/>
    <property type="match status" value="1"/>
</dbReference>
<proteinExistence type="inferred from homology"/>
<keyword id="KW-0067">ATP-binding</keyword>
<keyword id="KW-0963">Cytoplasm</keyword>
<keyword id="KW-0418">Kinase</keyword>
<keyword id="KW-0460">Magnesium</keyword>
<keyword id="KW-0479">Metal-binding</keyword>
<keyword id="KW-0546">Nucleotide metabolism</keyword>
<keyword id="KW-0547">Nucleotide-binding</keyword>
<keyword id="KW-0597">Phosphoprotein</keyword>
<keyword id="KW-0808">Transferase</keyword>
<reference key="1">
    <citation type="journal article" date="2003" name="Nature">
        <title>Genome divergence in two Prochlorococcus ecotypes reflects oceanic niche differentiation.</title>
        <authorList>
            <person name="Rocap G."/>
            <person name="Larimer F.W."/>
            <person name="Lamerdin J.E."/>
            <person name="Malfatti S."/>
            <person name="Chain P."/>
            <person name="Ahlgren N.A."/>
            <person name="Arellano A."/>
            <person name="Coleman M."/>
            <person name="Hauser L."/>
            <person name="Hess W.R."/>
            <person name="Johnson Z.I."/>
            <person name="Land M.L."/>
            <person name="Lindell D."/>
            <person name="Post A.F."/>
            <person name="Regala W."/>
            <person name="Shah M."/>
            <person name="Shaw S.L."/>
            <person name="Steglich C."/>
            <person name="Sullivan M.B."/>
            <person name="Ting C.S."/>
            <person name="Tolonen A."/>
            <person name="Webb E.A."/>
            <person name="Zinser E.R."/>
            <person name="Chisholm S.W."/>
        </authorList>
    </citation>
    <scope>NUCLEOTIDE SEQUENCE [LARGE SCALE GENOMIC DNA]</scope>
    <source>
        <strain>CCMP1986 / NIES-2087 / MED4</strain>
    </source>
</reference>
<sequence length="152" mass="17187">MIKERTFLAIKPDGVQRGYVSDIIGRFEKKGFKLVGLKQLIPTKQLAQDHYGVHRERPFFKDLVEFISSGPVVAMIWEGEGVILSARKLIGATKPLEAEPGTIRGDLAIDIGRNIIHGSDGEETAKFEINLWFNQDEICDWETSDSEWRAEN</sequence>
<evidence type="ECO:0000255" key="1">
    <source>
        <dbReference type="HAMAP-Rule" id="MF_00451"/>
    </source>
</evidence>
<protein>
    <recommendedName>
        <fullName evidence="1">Nucleoside diphosphate kinase</fullName>
        <shortName evidence="1">NDK</shortName>
        <shortName evidence="1">NDP kinase</shortName>
        <ecNumber evidence="1">2.7.4.6</ecNumber>
    </recommendedName>
    <alternativeName>
        <fullName evidence="1">Nucleoside-2-P kinase</fullName>
    </alternativeName>
</protein>
<organism>
    <name type="scientific">Prochlorococcus marinus subsp. pastoris (strain CCMP1986 / NIES-2087 / MED4)</name>
    <dbReference type="NCBI Taxonomy" id="59919"/>
    <lineage>
        <taxon>Bacteria</taxon>
        <taxon>Bacillati</taxon>
        <taxon>Cyanobacteriota</taxon>
        <taxon>Cyanophyceae</taxon>
        <taxon>Synechococcales</taxon>
        <taxon>Prochlorococcaceae</taxon>
        <taxon>Prochlorococcus</taxon>
    </lineage>
</organism>
<accession>Q7V3M8</accession>